<gene>
    <name evidence="1" type="primary">dinB</name>
    <name type="synonym">dinP</name>
    <name type="ordered locus">PSPTO_3990</name>
</gene>
<accession>Q87Y22</accession>
<keyword id="KW-0963">Cytoplasm</keyword>
<keyword id="KW-0227">DNA damage</keyword>
<keyword id="KW-0234">DNA repair</keyword>
<keyword id="KW-0235">DNA replication</keyword>
<keyword id="KW-0238">DNA-binding</keyword>
<keyword id="KW-0239">DNA-directed DNA polymerase</keyword>
<keyword id="KW-0460">Magnesium</keyword>
<keyword id="KW-0479">Metal-binding</keyword>
<keyword id="KW-0515">Mutator protein</keyword>
<keyword id="KW-0548">Nucleotidyltransferase</keyword>
<keyword id="KW-1185">Reference proteome</keyword>
<keyword id="KW-0808">Transferase</keyword>
<name>DPO4_PSESM</name>
<reference key="1">
    <citation type="journal article" date="2003" name="Proc. Natl. Acad. Sci. U.S.A.">
        <title>The complete genome sequence of the Arabidopsis and tomato pathogen Pseudomonas syringae pv. tomato DC3000.</title>
        <authorList>
            <person name="Buell C.R."/>
            <person name="Joardar V."/>
            <person name="Lindeberg M."/>
            <person name="Selengut J."/>
            <person name="Paulsen I.T."/>
            <person name="Gwinn M.L."/>
            <person name="Dodson R.J."/>
            <person name="DeBoy R.T."/>
            <person name="Durkin A.S."/>
            <person name="Kolonay J.F."/>
            <person name="Madupu R."/>
            <person name="Daugherty S.C."/>
            <person name="Brinkac L.M."/>
            <person name="Beanan M.J."/>
            <person name="Haft D.H."/>
            <person name="Nelson W.C."/>
            <person name="Davidsen T.M."/>
            <person name="Zafar N."/>
            <person name="Zhou L."/>
            <person name="Liu J."/>
            <person name="Yuan Q."/>
            <person name="Khouri H.M."/>
            <person name="Fedorova N.B."/>
            <person name="Tran B."/>
            <person name="Russell D."/>
            <person name="Berry K.J."/>
            <person name="Utterback T.R."/>
            <person name="Van Aken S.E."/>
            <person name="Feldblyum T.V."/>
            <person name="D'Ascenzo M."/>
            <person name="Deng W.-L."/>
            <person name="Ramos A.R."/>
            <person name="Alfano J.R."/>
            <person name="Cartinhour S."/>
            <person name="Chatterjee A.K."/>
            <person name="Delaney T.P."/>
            <person name="Lazarowitz S.G."/>
            <person name="Martin G.B."/>
            <person name="Schneider D.J."/>
            <person name="Tang X."/>
            <person name="Bender C.L."/>
            <person name="White O."/>
            <person name="Fraser C.M."/>
            <person name="Collmer A."/>
        </authorList>
    </citation>
    <scope>NUCLEOTIDE SEQUENCE [LARGE SCALE GENOMIC DNA]</scope>
    <source>
        <strain>ATCC BAA-871 / DC3000</strain>
    </source>
</reference>
<comment type="function">
    <text evidence="1">Poorly processive, error-prone DNA polymerase involved in untargeted mutagenesis. Copies undamaged DNA at stalled replication forks, which arise in vivo from mismatched or misaligned primer ends. These misaligned primers can be extended by PolIV. Exhibits no 3'-5' exonuclease (proofreading) activity. May be involved in translesional synthesis, in conjunction with the beta clamp from PolIII.</text>
</comment>
<comment type="catalytic activity">
    <reaction evidence="1">
        <text>DNA(n) + a 2'-deoxyribonucleoside 5'-triphosphate = DNA(n+1) + diphosphate</text>
        <dbReference type="Rhea" id="RHEA:22508"/>
        <dbReference type="Rhea" id="RHEA-COMP:17339"/>
        <dbReference type="Rhea" id="RHEA-COMP:17340"/>
        <dbReference type="ChEBI" id="CHEBI:33019"/>
        <dbReference type="ChEBI" id="CHEBI:61560"/>
        <dbReference type="ChEBI" id="CHEBI:173112"/>
        <dbReference type="EC" id="2.7.7.7"/>
    </reaction>
</comment>
<comment type="cofactor">
    <cofactor evidence="1">
        <name>Mg(2+)</name>
        <dbReference type="ChEBI" id="CHEBI:18420"/>
    </cofactor>
    <text evidence="1">Binds 2 magnesium ions per subunit.</text>
</comment>
<comment type="subunit">
    <text evidence="1">Monomer.</text>
</comment>
<comment type="subcellular location">
    <subcellularLocation>
        <location evidence="1">Cytoplasm</location>
    </subcellularLocation>
</comment>
<comment type="similarity">
    <text evidence="1">Belongs to the DNA polymerase type-Y family.</text>
</comment>
<dbReference type="EC" id="2.7.7.7" evidence="1"/>
<dbReference type="EMBL" id="AE016853">
    <property type="protein sequence ID" value="AAO57449.1"/>
    <property type="molecule type" value="Genomic_DNA"/>
</dbReference>
<dbReference type="RefSeq" id="NP_793754.1">
    <property type="nucleotide sequence ID" value="NC_004578.1"/>
</dbReference>
<dbReference type="RefSeq" id="WP_011104818.1">
    <property type="nucleotide sequence ID" value="NC_004578.1"/>
</dbReference>
<dbReference type="SMR" id="Q87Y22"/>
<dbReference type="STRING" id="223283.PSPTO_3990"/>
<dbReference type="GeneID" id="1185666"/>
<dbReference type="KEGG" id="pst:PSPTO_3990"/>
<dbReference type="PATRIC" id="fig|223283.9.peg.4092"/>
<dbReference type="eggNOG" id="COG0389">
    <property type="taxonomic scope" value="Bacteria"/>
</dbReference>
<dbReference type="HOGENOM" id="CLU_012348_1_2_6"/>
<dbReference type="OrthoDB" id="9808813at2"/>
<dbReference type="PhylomeDB" id="Q87Y22"/>
<dbReference type="Proteomes" id="UP000002515">
    <property type="component" value="Chromosome"/>
</dbReference>
<dbReference type="GO" id="GO:0005829">
    <property type="term" value="C:cytosol"/>
    <property type="evidence" value="ECO:0007669"/>
    <property type="project" value="TreeGrafter"/>
</dbReference>
<dbReference type="GO" id="GO:0003684">
    <property type="term" value="F:damaged DNA binding"/>
    <property type="evidence" value="ECO:0007669"/>
    <property type="project" value="InterPro"/>
</dbReference>
<dbReference type="GO" id="GO:0003887">
    <property type="term" value="F:DNA-directed DNA polymerase activity"/>
    <property type="evidence" value="ECO:0007669"/>
    <property type="project" value="UniProtKB-UniRule"/>
</dbReference>
<dbReference type="GO" id="GO:0000287">
    <property type="term" value="F:magnesium ion binding"/>
    <property type="evidence" value="ECO:0007669"/>
    <property type="project" value="UniProtKB-UniRule"/>
</dbReference>
<dbReference type="GO" id="GO:0006261">
    <property type="term" value="P:DNA-templated DNA replication"/>
    <property type="evidence" value="ECO:0007669"/>
    <property type="project" value="UniProtKB-UniRule"/>
</dbReference>
<dbReference type="GO" id="GO:0042276">
    <property type="term" value="P:error-prone translesion synthesis"/>
    <property type="evidence" value="ECO:0007669"/>
    <property type="project" value="TreeGrafter"/>
</dbReference>
<dbReference type="GO" id="GO:0009432">
    <property type="term" value="P:SOS response"/>
    <property type="evidence" value="ECO:0007669"/>
    <property type="project" value="TreeGrafter"/>
</dbReference>
<dbReference type="CDD" id="cd03586">
    <property type="entry name" value="PolY_Pol_IV_kappa"/>
    <property type="match status" value="1"/>
</dbReference>
<dbReference type="FunFam" id="1.10.150.20:FF:000019">
    <property type="entry name" value="DNA polymerase IV"/>
    <property type="match status" value="1"/>
</dbReference>
<dbReference type="FunFam" id="3.30.70.270:FF:000002">
    <property type="entry name" value="DNA polymerase IV"/>
    <property type="match status" value="1"/>
</dbReference>
<dbReference type="FunFam" id="3.40.1170.60:FF:000001">
    <property type="entry name" value="DNA polymerase IV"/>
    <property type="match status" value="1"/>
</dbReference>
<dbReference type="Gene3D" id="3.30.70.270">
    <property type="match status" value="1"/>
</dbReference>
<dbReference type="Gene3D" id="3.40.1170.60">
    <property type="match status" value="1"/>
</dbReference>
<dbReference type="Gene3D" id="1.10.150.20">
    <property type="entry name" value="5' to 3' exonuclease, C-terminal subdomain"/>
    <property type="match status" value="1"/>
</dbReference>
<dbReference type="Gene3D" id="3.30.1490.100">
    <property type="entry name" value="DNA polymerase, Y-family, little finger domain"/>
    <property type="match status" value="1"/>
</dbReference>
<dbReference type="HAMAP" id="MF_01113">
    <property type="entry name" value="DNApol_IV"/>
    <property type="match status" value="1"/>
</dbReference>
<dbReference type="InterPro" id="IPR043502">
    <property type="entry name" value="DNA/RNA_pol_sf"/>
</dbReference>
<dbReference type="InterPro" id="IPR036775">
    <property type="entry name" value="DNA_pol_Y-fam_lit_finger_sf"/>
</dbReference>
<dbReference type="InterPro" id="IPR017961">
    <property type="entry name" value="DNA_pol_Y-fam_little_finger"/>
</dbReference>
<dbReference type="InterPro" id="IPR050116">
    <property type="entry name" value="DNA_polymerase-Y"/>
</dbReference>
<dbReference type="InterPro" id="IPR022880">
    <property type="entry name" value="DNApol_IV"/>
</dbReference>
<dbReference type="InterPro" id="IPR024728">
    <property type="entry name" value="PolY_HhH_motif"/>
</dbReference>
<dbReference type="InterPro" id="IPR043128">
    <property type="entry name" value="Rev_trsase/Diguanyl_cyclase"/>
</dbReference>
<dbReference type="InterPro" id="IPR001126">
    <property type="entry name" value="UmuC"/>
</dbReference>
<dbReference type="NCBIfam" id="NF002677">
    <property type="entry name" value="PRK02406.1"/>
    <property type="match status" value="1"/>
</dbReference>
<dbReference type="PANTHER" id="PTHR11076:SF33">
    <property type="entry name" value="DNA POLYMERASE KAPPA"/>
    <property type="match status" value="1"/>
</dbReference>
<dbReference type="PANTHER" id="PTHR11076">
    <property type="entry name" value="DNA REPAIR POLYMERASE UMUC / TRANSFERASE FAMILY MEMBER"/>
    <property type="match status" value="1"/>
</dbReference>
<dbReference type="Pfam" id="PF00817">
    <property type="entry name" value="IMS"/>
    <property type="match status" value="1"/>
</dbReference>
<dbReference type="Pfam" id="PF11799">
    <property type="entry name" value="IMS_C"/>
    <property type="match status" value="1"/>
</dbReference>
<dbReference type="Pfam" id="PF11798">
    <property type="entry name" value="IMS_HHH"/>
    <property type="match status" value="1"/>
</dbReference>
<dbReference type="SUPFAM" id="SSF56672">
    <property type="entry name" value="DNA/RNA polymerases"/>
    <property type="match status" value="1"/>
</dbReference>
<dbReference type="SUPFAM" id="SSF100879">
    <property type="entry name" value="Lesion bypass DNA polymerase (Y-family), little finger domain"/>
    <property type="match status" value="1"/>
</dbReference>
<dbReference type="PROSITE" id="PS50173">
    <property type="entry name" value="UMUC"/>
    <property type="match status" value="1"/>
</dbReference>
<proteinExistence type="inferred from homology"/>
<evidence type="ECO:0000255" key="1">
    <source>
        <dbReference type="HAMAP-Rule" id="MF_01113"/>
    </source>
</evidence>
<feature type="chain" id="PRO_0000173934" description="DNA polymerase IV">
    <location>
        <begin position="1"/>
        <end position="353"/>
    </location>
</feature>
<feature type="domain" description="UmuC" evidence="1">
    <location>
        <begin position="6"/>
        <end position="187"/>
    </location>
</feature>
<feature type="active site" evidence="1">
    <location>
        <position position="106"/>
    </location>
</feature>
<feature type="binding site" evidence="1">
    <location>
        <position position="10"/>
    </location>
    <ligand>
        <name>Mg(2+)</name>
        <dbReference type="ChEBI" id="CHEBI:18420"/>
    </ligand>
</feature>
<feature type="binding site" evidence="1">
    <location>
        <position position="105"/>
    </location>
    <ligand>
        <name>Mg(2+)</name>
        <dbReference type="ChEBI" id="CHEBI:18420"/>
    </ligand>
</feature>
<feature type="site" description="Substrate discrimination" evidence="1">
    <location>
        <position position="15"/>
    </location>
</feature>
<organism>
    <name type="scientific">Pseudomonas syringae pv. tomato (strain ATCC BAA-871 / DC3000)</name>
    <dbReference type="NCBI Taxonomy" id="223283"/>
    <lineage>
        <taxon>Bacteria</taxon>
        <taxon>Pseudomonadati</taxon>
        <taxon>Pseudomonadota</taxon>
        <taxon>Gammaproteobacteria</taxon>
        <taxon>Pseudomonadales</taxon>
        <taxon>Pseudomonadaceae</taxon>
        <taxon>Pseudomonas</taxon>
    </lineage>
</organism>
<protein>
    <recommendedName>
        <fullName evidence="1">DNA polymerase IV</fullName>
        <shortName evidence="1">Pol IV</shortName>
        <ecNumber evidence="1">2.7.7.7</ecNumber>
    </recommendedName>
</protein>
<sequence length="353" mass="39320">MTQRKIIHIDCDCFYAAIEMRDEPELAGKPLAVGGSAERRGVIATCNYEARAYGVRSAMSSRHALKLCPDLTIVKPRMEAYKEASREIHSIFRDYTDLIEPLSLDEAFLDVSDTHHFSGSATRIAQDIRRRVSNQLHITVSAGVAPNKFLAKIASDWKKPNGLFVITPDQVEDFVASLPVTKLHGVGKVTADKLGRLGIVDCADLRSRSKLALVREFGSFGERLWSLAHGIDDRPVQNDSRRQSVSVENTYDTDLPDLAACLEKLPALLETLGTRMERMEGQYRPGKPFVKVKFHDFTQTTLEQSGAGRDLGSYEQLLTQAFARGGKPVRLLGIGVRLHDLRDAHEQLELFST</sequence>